<geneLocation type="chloroplast"/>
<name>PSBZ_EUGVI</name>
<sequence length="32" mass="3421">NGWNDNKTFILIGSASWAALVLLVGSLNSFVI</sequence>
<dbReference type="EMBL" id="AY047487">
    <property type="protein sequence ID" value="AAL83367.1"/>
    <property type="molecule type" value="Genomic_DNA"/>
</dbReference>
<dbReference type="SMR" id="Q8SL87"/>
<dbReference type="GO" id="GO:0009535">
    <property type="term" value="C:chloroplast thylakoid membrane"/>
    <property type="evidence" value="ECO:0007669"/>
    <property type="project" value="UniProtKB-SubCell"/>
</dbReference>
<dbReference type="GO" id="GO:0009539">
    <property type="term" value="C:photosystem II reaction center"/>
    <property type="evidence" value="ECO:0007669"/>
    <property type="project" value="InterPro"/>
</dbReference>
<dbReference type="GO" id="GO:0015979">
    <property type="term" value="P:photosynthesis"/>
    <property type="evidence" value="ECO:0007669"/>
    <property type="project" value="UniProtKB-KW"/>
</dbReference>
<dbReference type="GO" id="GO:0042549">
    <property type="term" value="P:photosystem II stabilization"/>
    <property type="evidence" value="ECO:0007669"/>
    <property type="project" value="InterPro"/>
</dbReference>
<dbReference type="Gene3D" id="1.10.287.740">
    <property type="entry name" value="Photosystem II PsbZ, reaction centre"/>
    <property type="match status" value="1"/>
</dbReference>
<dbReference type="InterPro" id="IPR002644">
    <property type="entry name" value="PSII_PsbZ"/>
</dbReference>
<dbReference type="InterPro" id="IPR036512">
    <property type="entry name" value="PSII_PsbZ_sf"/>
</dbReference>
<dbReference type="Pfam" id="PF01737">
    <property type="entry name" value="Ycf9"/>
    <property type="match status" value="1"/>
</dbReference>
<dbReference type="SUPFAM" id="SSF161055">
    <property type="entry name" value="PsbZ-like"/>
    <property type="match status" value="1"/>
</dbReference>
<gene>
    <name evidence="3" type="primary">psbZ</name>
    <name type="synonym">ycf9</name>
</gene>
<proteinExistence type="inferred from homology"/>
<comment type="function">
    <text evidence="1">May control the interaction of photosystem II (PSII) cores with the light-harvesting antenna, regulates electron flow through the 2 photosystem reaction centers. PSII is a light-driven water plastoquinone oxidoreductase, using light energy to abstract electrons from H(2)O, generating a proton gradient subsequently used for ATP formation.</text>
</comment>
<comment type="subunit">
    <text evidence="1">PSII is composed of 1 copy each of membrane proteins PsbA, PsbB, PsbC, PsbD, PsbE, PsbF, PsbH, PsbI, PsbJ, PsbK, PsbL, PsbM, PsbT, PsbY, PsbZ, Psb30/Ycf12, at least 3 peripheral proteins of the oxygen-evolving complex and a large number of cofactors. It forms dimeric complexes.</text>
</comment>
<comment type="subcellular location">
    <subcellularLocation>
        <location evidence="1">Plastid</location>
        <location evidence="1">Chloroplast thylakoid membrane</location>
        <topology evidence="1">Multi-pass membrane protein</topology>
    </subcellularLocation>
</comment>
<comment type="similarity">
    <text evidence="3">Belongs to the PsbZ family.</text>
</comment>
<protein>
    <recommendedName>
        <fullName evidence="3">Photosystem II reaction center protein Z</fullName>
        <shortName evidence="3">PSII-Z</shortName>
    </recommendedName>
</protein>
<organism>
    <name type="scientific">Euglena viridis</name>
    <name type="common">Cercaria viridis</name>
    <dbReference type="NCBI Taxonomy" id="3040"/>
    <lineage>
        <taxon>Eukaryota</taxon>
        <taxon>Discoba</taxon>
        <taxon>Euglenozoa</taxon>
        <taxon>Euglenida</taxon>
        <taxon>Spirocuta</taxon>
        <taxon>Euglenophyceae</taxon>
        <taxon>Euglenales</taxon>
        <taxon>Euglenaceae</taxon>
        <taxon>Euglena</taxon>
    </lineage>
</organism>
<keyword id="KW-0150">Chloroplast</keyword>
<keyword id="KW-0472">Membrane</keyword>
<keyword id="KW-0602">Photosynthesis</keyword>
<keyword id="KW-0604">Photosystem II</keyword>
<keyword id="KW-0934">Plastid</keyword>
<keyword id="KW-0674">Reaction center</keyword>
<keyword id="KW-0793">Thylakoid</keyword>
<keyword id="KW-0812">Transmembrane</keyword>
<keyword id="KW-1133">Transmembrane helix</keyword>
<feature type="chain" id="PRO_0000217703" description="Photosystem II reaction center protein Z">
    <location>
        <begin position="1" status="less than"/>
        <end position="32"/>
    </location>
</feature>
<feature type="transmembrane region" description="Helical" evidence="2">
    <location>
        <begin position="9"/>
        <end position="31"/>
    </location>
</feature>
<feature type="non-terminal residue">
    <location>
        <position position="1"/>
    </location>
</feature>
<evidence type="ECO:0000250" key="1">
    <source>
        <dbReference type="UniProtKB" id="P92276"/>
    </source>
</evidence>
<evidence type="ECO:0000255" key="2"/>
<evidence type="ECO:0000305" key="3"/>
<reference key="1">
    <citation type="journal article" date="2002" name="Nucleic Acids Res.">
        <title>Identification and comparative analysis of the chloroplast alpha-subunit gene of DNA-dependent RNA polymerase from seven Euglena species.</title>
        <authorList>
            <person name="Sheveleva E.V."/>
            <person name="Giordani N.V."/>
            <person name="Hallick R.B."/>
        </authorList>
    </citation>
    <scope>NUCLEOTIDE SEQUENCE [GENOMIC DNA]</scope>
</reference>
<accession>Q8SL87</accession>